<feature type="chain" id="PRO_1000216087" description="Enoyl-[acyl-carrier-protein] reductase [NADH]">
    <location>
        <begin position="1"/>
        <end position="397"/>
    </location>
</feature>
<feature type="active site" description="Proton donor" evidence="1">
    <location>
        <position position="234"/>
    </location>
</feature>
<feature type="binding site" evidence="1">
    <location>
        <begin position="48"/>
        <end position="53"/>
    </location>
    <ligand>
        <name>NAD(+)</name>
        <dbReference type="ChEBI" id="CHEBI:57540"/>
    </ligand>
</feature>
<feature type="binding site" evidence="1">
    <location>
        <begin position="74"/>
        <end position="75"/>
    </location>
    <ligand>
        <name>NAD(+)</name>
        <dbReference type="ChEBI" id="CHEBI:57540"/>
    </ligand>
</feature>
<feature type="binding site" evidence="1">
    <location>
        <begin position="111"/>
        <end position="112"/>
    </location>
    <ligand>
        <name>NAD(+)</name>
        <dbReference type="ChEBI" id="CHEBI:57540"/>
    </ligand>
</feature>
<feature type="binding site" evidence="1">
    <location>
        <begin position="139"/>
        <end position="140"/>
    </location>
    <ligand>
        <name>NAD(+)</name>
        <dbReference type="ChEBI" id="CHEBI:57540"/>
    </ligand>
</feature>
<feature type="binding site" evidence="1">
    <location>
        <position position="224"/>
    </location>
    <ligand>
        <name>substrate</name>
    </ligand>
</feature>
<feature type="binding site" evidence="1">
    <location>
        <position position="243"/>
    </location>
    <ligand>
        <name>NAD(+)</name>
        <dbReference type="ChEBI" id="CHEBI:57540"/>
    </ligand>
</feature>
<feature type="binding site" evidence="1">
    <location>
        <begin position="272"/>
        <end position="274"/>
    </location>
    <ligand>
        <name>NAD(+)</name>
        <dbReference type="ChEBI" id="CHEBI:57540"/>
    </ligand>
</feature>
<feature type="site" description="Plays an important role in discriminating NADH against NADPH" evidence="1">
    <location>
        <position position="75"/>
    </location>
</feature>
<accession>C3K5J5</accession>
<sequence length="397" mass="42960">MIIKPRVRGFICVTAHPVGCEANVKEQIDYVTQHGVIEGGPKKVLVLGASTGYGLAARISAAFGCGADTLGVFFEKEGEEGKLSSAGWYNSAAFEKFAVEKGLYAKSINGDAFSDEIKRLTIETIKKDLGKIDLVVYSLAAPRRTDPQGVVHTSTLKPIGKAVTLRGINTDKGVVVDTTLEPATQEEIDGTVKVMGGEDWQLWIDALRDADVLAEGAKTTAFTYLGEKLTQDIYWNGSIGEAKKDLDKKVLTLRDNLAALKGDARVSVLKAVVTQASSAIPIMPLYLSLLFKVMKEQGTHEGCIEQVYGLFKDSLYGSEPKLDADGRLRADLAELEPKVQDAVAALWNQVTDDNVNEISDFAGYKAEFLRLFGFEIDGVDYDADVNPTVKINGLISA</sequence>
<reference key="1">
    <citation type="journal article" date="2009" name="Genome Biol.">
        <title>Genomic and genetic analyses of diversity and plant interactions of Pseudomonas fluorescens.</title>
        <authorList>
            <person name="Silby M.W."/>
            <person name="Cerdeno-Tarraga A.M."/>
            <person name="Vernikos G.S."/>
            <person name="Giddens S.R."/>
            <person name="Jackson R.W."/>
            <person name="Preston G.M."/>
            <person name="Zhang X.-X."/>
            <person name="Moon C.D."/>
            <person name="Gehrig S.M."/>
            <person name="Godfrey S.A.C."/>
            <person name="Knight C.G."/>
            <person name="Malone J.G."/>
            <person name="Robinson Z."/>
            <person name="Spiers A.J."/>
            <person name="Harris S."/>
            <person name="Challis G.L."/>
            <person name="Yaxley A.M."/>
            <person name="Harris D."/>
            <person name="Seeger K."/>
            <person name="Murphy L."/>
            <person name="Rutter S."/>
            <person name="Squares R."/>
            <person name="Quail M.A."/>
            <person name="Saunders E."/>
            <person name="Mavromatis K."/>
            <person name="Brettin T.S."/>
            <person name="Bentley S.D."/>
            <person name="Hothersall J."/>
            <person name="Stephens E."/>
            <person name="Thomas C.M."/>
            <person name="Parkhill J."/>
            <person name="Levy S.B."/>
            <person name="Rainey P.B."/>
            <person name="Thomson N.R."/>
        </authorList>
    </citation>
    <scope>NUCLEOTIDE SEQUENCE [LARGE SCALE GENOMIC DNA]</scope>
    <source>
        <strain>SBW25</strain>
    </source>
</reference>
<evidence type="ECO:0000255" key="1">
    <source>
        <dbReference type="HAMAP-Rule" id="MF_01838"/>
    </source>
</evidence>
<dbReference type="EC" id="1.3.1.9" evidence="1"/>
<dbReference type="EMBL" id="AM181176">
    <property type="protein sequence ID" value="CAY47871.1"/>
    <property type="molecule type" value="Genomic_DNA"/>
</dbReference>
<dbReference type="RefSeq" id="WP_012722908.1">
    <property type="nucleotide sequence ID" value="NC_012660.1"/>
</dbReference>
<dbReference type="SMR" id="C3K5J5"/>
<dbReference type="GeneID" id="93463308"/>
<dbReference type="eggNOG" id="COG3007">
    <property type="taxonomic scope" value="Bacteria"/>
</dbReference>
<dbReference type="HOGENOM" id="CLU_057698_1_0_6"/>
<dbReference type="OrthoDB" id="9802260at2"/>
<dbReference type="UniPathway" id="UPA00094"/>
<dbReference type="GO" id="GO:0004318">
    <property type="term" value="F:enoyl-[acyl-carrier-protein] reductase (NADH) activity"/>
    <property type="evidence" value="ECO:0007669"/>
    <property type="project" value="UniProtKB-UniRule"/>
</dbReference>
<dbReference type="GO" id="GO:0051287">
    <property type="term" value="F:NAD binding"/>
    <property type="evidence" value="ECO:0007669"/>
    <property type="project" value="UniProtKB-UniRule"/>
</dbReference>
<dbReference type="GO" id="GO:0050343">
    <property type="term" value="F:trans-2-enoyl-CoA reductase (NADH) activity"/>
    <property type="evidence" value="ECO:0007669"/>
    <property type="project" value="TreeGrafter"/>
</dbReference>
<dbReference type="GO" id="GO:0006633">
    <property type="term" value="P:fatty acid biosynthetic process"/>
    <property type="evidence" value="ECO:0007669"/>
    <property type="project" value="UniProtKB-UniRule"/>
</dbReference>
<dbReference type="FunFam" id="3.40.50.720:FF:000221">
    <property type="entry name" value="Enoyl-[acyl-carrier-protein] reductase [NADH]"/>
    <property type="match status" value="1"/>
</dbReference>
<dbReference type="Gene3D" id="3.40.50.720">
    <property type="entry name" value="NAD(P)-binding Rossmann-like Domain"/>
    <property type="match status" value="1"/>
</dbReference>
<dbReference type="HAMAP" id="MF_01838">
    <property type="entry name" value="FabV_reductase"/>
    <property type="match status" value="1"/>
</dbReference>
<dbReference type="InterPro" id="IPR024906">
    <property type="entry name" value="Eno_Rdtase_FAD-bd_dom"/>
</dbReference>
<dbReference type="InterPro" id="IPR024910">
    <property type="entry name" value="Enoyl-CoA_Rdtase_cat_dom"/>
</dbReference>
<dbReference type="InterPro" id="IPR050048">
    <property type="entry name" value="FabV-like_NADH_b"/>
</dbReference>
<dbReference type="InterPro" id="IPR010758">
    <property type="entry name" value="Trans-2-enoyl-CoA_reductase"/>
</dbReference>
<dbReference type="NCBIfam" id="NF043048">
    <property type="entry name" value="EnoyACPredFabV"/>
    <property type="match status" value="1"/>
</dbReference>
<dbReference type="NCBIfam" id="NF010177">
    <property type="entry name" value="PRK13656.1"/>
    <property type="match status" value="1"/>
</dbReference>
<dbReference type="PANTHER" id="PTHR37480">
    <property type="entry name" value="ENOYL-[ACYL-CARRIER-PROTEIN] REDUCTASE [NADH]"/>
    <property type="match status" value="1"/>
</dbReference>
<dbReference type="PANTHER" id="PTHR37480:SF1">
    <property type="entry name" value="ENOYL-[ACYL-CARRIER-PROTEIN] REDUCTASE [NADH]"/>
    <property type="match status" value="1"/>
</dbReference>
<dbReference type="Pfam" id="PF07055">
    <property type="entry name" value="Eno-Rase_FAD_bd"/>
    <property type="match status" value="1"/>
</dbReference>
<dbReference type="Pfam" id="PF12242">
    <property type="entry name" value="Eno-Rase_NADH_b"/>
    <property type="match status" value="1"/>
</dbReference>
<dbReference type="Pfam" id="PF12241">
    <property type="entry name" value="Enoyl_reductase"/>
    <property type="match status" value="1"/>
</dbReference>
<gene>
    <name evidence="1" type="primary">fabV</name>
    <name type="ordered locus">PFLU_1621</name>
</gene>
<organism>
    <name type="scientific">Pseudomonas fluorescens (strain SBW25)</name>
    <dbReference type="NCBI Taxonomy" id="216595"/>
    <lineage>
        <taxon>Bacteria</taxon>
        <taxon>Pseudomonadati</taxon>
        <taxon>Pseudomonadota</taxon>
        <taxon>Gammaproteobacteria</taxon>
        <taxon>Pseudomonadales</taxon>
        <taxon>Pseudomonadaceae</taxon>
        <taxon>Pseudomonas</taxon>
    </lineage>
</organism>
<name>FABV_PSEFS</name>
<protein>
    <recommendedName>
        <fullName evidence="1">Enoyl-[acyl-carrier-protein] reductase [NADH]</fullName>
        <shortName evidence="1">ENR</shortName>
        <ecNumber evidence="1">1.3.1.9</ecNumber>
    </recommendedName>
</protein>
<proteinExistence type="inferred from homology"/>
<keyword id="KW-0275">Fatty acid biosynthesis</keyword>
<keyword id="KW-0276">Fatty acid metabolism</keyword>
<keyword id="KW-0444">Lipid biosynthesis</keyword>
<keyword id="KW-0443">Lipid metabolism</keyword>
<keyword id="KW-0520">NAD</keyword>
<keyword id="KW-0560">Oxidoreductase</keyword>
<comment type="function">
    <text evidence="1">Involved in the final reduction of the elongation cycle of fatty acid synthesis (FAS II). Catalyzes the reduction of a carbon-carbon double bond in an enoyl moiety that is covalently linked to an acyl carrier protein (ACP).</text>
</comment>
<comment type="catalytic activity">
    <reaction evidence="1">
        <text>a 2,3-saturated acyl-[ACP] + NAD(+) = a (2E)-enoyl-[ACP] + NADH + H(+)</text>
        <dbReference type="Rhea" id="RHEA:10240"/>
        <dbReference type="Rhea" id="RHEA-COMP:9925"/>
        <dbReference type="Rhea" id="RHEA-COMP:9926"/>
        <dbReference type="ChEBI" id="CHEBI:15378"/>
        <dbReference type="ChEBI" id="CHEBI:57540"/>
        <dbReference type="ChEBI" id="CHEBI:57945"/>
        <dbReference type="ChEBI" id="CHEBI:78784"/>
        <dbReference type="ChEBI" id="CHEBI:78785"/>
        <dbReference type="EC" id="1.3.1.9"/>
    </reaction>
</comment>
<comment type="pathway">
    <text evidence="1">Lipid metabolism; fatty acid biosynthesis.</text>
</comment>
<comment type="subunit">
    <text evidence="1">Monomer.</text>
</comment>
<comment type="similarity">
    <text evidence="1">Belongs to the TER reductase family.</text>
</comment>